<keyword id="KW-0963">Cytoplasm</keyword>
<keyword id="KW-0808">Transferase</keyword>
<feature type="chain" id="PRO_0000300982" description="L-carnitine CoA-transferase">
    <location>
        <begin position="1"/>
        <end position="405"/>
    </location>
</feature>
<feature type="active site" description="Nucleophile" evidence="1">
    <location>
        <position position="169"/>
    </location>
</feature>
<feature type="binding site" evidence="1">
    <location>
        <position position="97"/>
    </location>
    <ligand>
        <name>CoA</name>
        <dbReference type="ChEBI" id="CHEBI:57287"/>
    </ligand>
</feature>
<feature type="binding site" evidence="1">
    <location>
        <position position="104"/>
    </location>
    <ligand>
        <name>CoA</name>
        <dbReference type="ChEBI" id="CHEBI:57287"/>
    </ligand>
</feature>
<dbReference type="EC" id="2.8.3.21" evidence="1"/>
<dbReference type="EMBL" id="CP000026">
    <property type="protein sequence ID" value="AAV76107.1"/>
    <property type="molecule type" value="Genomic_DNA"/>
</dbReference>
<dbReference type="RefSeq" id="WP_001016213.1">
    <property type="nucleotide sequence ID" value="NC_006511.1"/>
</dbReference>
<dbReference type="SMR" id="Q5PIK9"/>
<dbReference type="KEGG" id="spt:SPA0073"/>
<dbReference type="HOGENOM" id="CLU_033975_2_0_6"/>
<dbReference type="UniPathway" id="UPA00117"/>
<dbReference type="Proteomes" id="UP000008185">
    <property type="component" value="Chromosome"/>
</dbReference>
<dbReference type="GO" id="GO:0005737">
    <property type="term" value="C:cytoplasm"/>
    <property type="evidence" value="ECO:0007669"/>
    <property type="project" value="UniProtKB-SubCell"/>
</dbReference>
<dbReference type="GO" id="GO:0008735">
    <property type="term" value="F:L-carnitine CoA-transferase activity"/>
    <property type="evidence" value="ECO:0007669"/>
    <property type="project" value="RHEA"/>
</dbReference>
<dbReference type="GO" id="GO:0009437">
    <property type="term" value="P:carnitine metabolic process"/>
    <property type="evidence" value="ECO:0007669"/>
    <property type="project" value="UniProtKB-UniRule"/>
</dbReference>
<dbReference type="FunFam" id="3.30.1540.10:FF:000001">
    <property type="entry name" value="L-carnitine CoA-transferase"/>
    <property type="match status" value="1"/>
</dbReference>
<dbReference type="Gene3D" id="3.40.50.10540">
    <property type="entry name" value="Crotonobetainyl-coa:carnitine coa-transferase, domain 1"/>
    <property type="match status" value="1"/>
</dbReference>
<dbReference type="Gene3D" id="3.30.1540.10">
    <property type="entry name" value="formyl-coa transferase, domain 3"/>
    <property type="match status" value="1"/>
</dbReference>
<dbReference type="HAMAP" id="MF_01050">
    <property type="entry name" value="CaiB"/>
    <property type="match status" value="1"/>
</dbReference>
<dbReference type="InterPro" id="IPR050509">
    <property type="entry name" value="CoA-transferase_III"/>
</dbReference>
<dbReference type="InterPro" id="IPR023452">
    <property type="entry name" value="CoA-Trfase_CaiB"/>
</dbReference>
<dbReference type="InterPro" id="IPR003673">
    <property type="entry name" value="CoA-Trfase_fam_III"/>
</dbReference>
<dbReference type="InterPro" id="IPR044855">
    <property type="entry name" value="CoA-Trfase_III_dom3_sf"/>
</dbReference>
<dbReference type="InterPro" id="IPR023606">
    <property type="entry name" value="CoA-Trfase_III_dom_1_sf"/>
</dbReference>
<dbReference type="NCBIfam" id="NF002914">
    <property type="entry name" value="PRK03525.1"/>
    <property type="match status" value="1"/>
</dbReference>
<dbReference type="PANTHER" id="PTHR48228:SF6">
    <property type="entry name" value="L-CARNITINE COA-TRANSFERASE"/>
    <property type="match status" value="1"/>
</dbReference>
<dbReference type="PANTHER" id="PTHR48228">
    <property type="entry name" value="SUCCINYL-COA--D-CITRAMALATE COA-TRANSFERASE"/>
    <property type="match status" value="1"/>
</dbReference>
<dbReference type="Pfam" id="PF02515">
    <property type="entry name" value="CoA_transf_3"/>
    <property type="match status" value="1"/>
</dbReference>
<dbReference type="SUPFAM" id="SSF89796">
    <property type="entry name" value="CoA-transferase family III (CaiB/BaiF)"/>
    <property type="match status" value="1"/>
</dbReference>
<proteinExistence type="inferred from homology"/>
<reference key="1">
    <citation type="journal article" date="2004" name="Nat. Genet.">
        <title>Comparison of genome degradation in Paratyphi A and Typhi, human-restricted serovars of Salmonella enterica that cause typhoid.</title>
        <authorList>
            <person name="McClelland M."/>
            <person name="Sanderson K.E."/>
            <person name="Clifton S.W."/>
            <person name="Latreille P."/>
            <person name="Porwollik S."/>
            <person name="Sabo A."/>
            <person name="Meyer R."/>
            <person name="Bieri T."/>
            <person name="Ozersky P."/>
            <person name="McLellan M."/>
            <person name="Harkins C.R."/>
            <person name="Wang C."/>
            <person name="Nguyen C."/>
            <person name="Berghoff A."/>
            <person name="Elliott G."/>
            <person name="Kohlberg S."/>
            <person name="Strong C."/>
            <person name="Du F."/>
            <person name="Carter J."/>
            <person name="Kremizki C."/>
            <person name="Layman D."/>
            <person name="Leonard S."/>
            <person name="Sun H."/>
            <person name="Fulton L."/>
            <person name="Nash W."/>
            <person name="Miner T."/>
            <person name="Minx P."/>
            <person name="Delehaunty K."/>
            <person name="Fronick C."/>
            <person name="Magrini V."/>
            <person name="Nhan M."/>
            <person name="Warren W."/>
            <person name="Florea L."/>
            <person name="Spieth J."/>
            <person name="Wilson R.K."/>
        </authorList>
    </citation>
    <scope>NUCLEOTIDE SEQUENCE [LARGE SCALE GENOMIC DNA]</scope>
    <source>
        <strain>ATCC 9150 / SARB42</strain>
    </source>
</reference>
<organism>
    <name type="scientific">Salmonella paratyphi A (strain ATCC 9150 / SARB42)</name>
    <dbReference type="NCBI Taxonomy" id="295319"/>
    <lineage>
        <taxon>Bacteria</taxon>
        <taxon>Pseudomonadati</taxon>
        <taxon>Pseudomonadota</taxon>
        <taxon>Gammaproteobacteria</taxon>
        <taxon>Enterobacterales</taxon>
        <taxon>Enterobacteriaceae</taxon>
        <taxon>Salmonella</taxon>
    </lineage>
</organism>
<name>CAIB_SALPA</name>
<accession>Q5PIK9</accession>
<evidence type="ECO:0000255" key="1">
    <source>
        <dbReference type="HAMAP-Rule" id="MF_01050"/>
    </source>
</evidence>
<sequence length="405" mass="44910">MNHLPMPTFGPLAGVRVVFSGIEIAGPFAGQMFAEWGAEVIWIENVAWADTIRVQPNYPQLSRRNLHALSLNIFKDEGREAFLKLMETTDIFIEASKGPAFARRGITDEVLWEHNPKLVIAHLSGFGQYGTEEYTNLPAYNTIAQAFSGYLIQNGDVDQPMPAFPYTADYFSGMTATTAALAALHKVRETGKGESIDIAMYEVMLRMGQYFMMDYFNGGEICPRMTKGKDPYYAGCGLYKCADGYIVMELVGITQINECFKDIGLAHILGTPEVPEGTQLIHRVECPYGPLVEEKLDAWLATHTIAEVQARFAELNIACAKVLTIPELEGNPQYVARESITQWQTMDGRTCKGPNIMPKFKNNPGKIWRGMPSHGMDTAAILKNIGYSEADIKELVGKGLAKVED</sequence>
<gene>
    <name evidence="1" type="primary">caiB</name>
    <name type="ordered locus">SPA0073</name>
</gene>
<protein>
    <recommendedName>
        <fullName evidence="1">L-carnitine CoA-transferase</fullName>
        <ecNumber evidence="1">2.8.3.21</ecNumber>
    </recommendedName>
    <alternativeName>
        <fullName evidence="1">Crotonobetainyl-CoA:carnitine CoA-transferase</fullName>
    </alternativeName>
</protein>
<comment type="function">
    <text evidence="1">Catalyzes the reversible transfer of the CoA moiety from gamma-butyrobetainyl-CoA to L-carnitine to generate L-carnitinyl-CoA and gamma-butyrobetaine. Is also able to catalyze the reversible transfer of the CoA moiety from gamma-butyrobetainyl-CoA or L-carnitinyl-CoA to crotonobetaine to generate crotonobetainyl-CoA.</text>
</comment>
<comment type="catalytic activity">
    <reaction evidence="1">
        <text>crotonobetainyl-CoA + (R)-carnitine = crotonobetaine + (R)-carnitinyl-CoA</text>
        <dbReference type="Rhea" id="RHEA:28526"/>
        <dbReference type="ChEBI" id="CHEBI:16347"/>
        <dbReference type="ChEBI" id="CHEBI:17237"/>
        <dbReference type="ChEBI" id="CHEBI:60932"/>
        <dbReference type="ChEBI" id="CHEBI:60933"/>
        <dbReference type="EC" id="2.8.3.21"/>
    </reaction>
</comment>
<comment type="catalytic activity">
    <reaction evidence="1">
        <text>4-(trimethylamino)butanoyl-CoA + (R)-carnitine = (R)-carnitinyl-CoA + 4-(trimethylamino)butanoate</text>
        <dbReference type="Rhea" id="RHEA:28418"/>
        <dbReference type="ChEBI" id="CHEBI:16244"/>
        <dbReference type="ChEBI" id="CHEBI:16347"/>
        <dbReference type="ChEBI" id="CHEBI:60932"/>
        <dbReference type="ChEBI" id="CHEBI:61513"/>
        <dbReference type="EC" id="2.8.3.21"/>
    </reaction>
</comment>
<comment type="pathway">
    <text evidence="1">Amine and polyamine metabolism; carnitine metabolism.</text>
</comment>
<comment type="subunit">
    <text evidence="1">Homodimer.</text>
</comment>
<comment type="subcellular location">
    <subcellularLocation>
        <location evidence="1">Cytoplasm</location>
    </subcellularLocation>
</comment>
<comment type="similarity">
    <text evidence="1">Belongs to the CoA-transferase III family. CaiB subfamily.</text>
</comment>